<reference key="1">
    <citation type="journal article" date="2007" name="J. Bacteriol.">
        <title>Genome of the opportunistic pathogen Streptococcus sanguinis.</title>
        <authorList>
            <person name="Xu P."/>
            <person name="Alves J.M."/>
            <person name="Kitten T."/>
            <person name="Brown A."/>
            <person name="Chen Z."/>
            <person name="Ozaki L.S."/>
            <person name="Manque P."/>
            <person name="Ge X."/>
            <person name="Serrano M.G."/>
            <person name="Puiu D."/>
            <person name="Hendricks S."/>
            <person name="Wang Y."/>
            <person name="Chaplin M.D."/>
            <person name="Akan D."/>
            <person name="Paik S."/>
            <person name="Peterson D.L."/>
            <person name="Macrina F.L."/>
            <person name="Buck G.A."/>
        </authorList>
    </citation>
    <scope>NUCLEOTIDE SEQUENCE [LARGE SCALE GENOMIC DNA]</scope>
    <source>
        <strain>SK36</strain>
    </source>
</reference>
<proteinExistence type="inferred from homology"/>
<organism>
    <name type="scientific">Streptococcus sanguinis (strain SK36)</name>
    <dbReference type="NCBI Taxonomy" id="388919"/>
    <lineage>
        <taxon>Bacteria</taxon>
        <taxon>Bacillati</taxon>
        <taxon>Bacillota</taxon>
        <taxon>Bacilli</taxon>
        <taxon>Lactobacillales</taxon>
        <taxon>Streptococcaceae</taxon>
        <taxon>Streptococcus</taxon>
    </lineage>
</organism>
<name>METE_STRSV</name>
<gene>
    <name evidence="1" type="primary">metE</name>
    <name type="ordered locus">SSA_0416</name>
</gene>
<protein>
    <recommendedName>
        <fullName evidence="1">5-methyltetrahydropteroyltriglutamate--homocysteine methyltransferase</fullName>
        <ecNumber evidence="1">2.1.1.14</ecNumber>
    </recommendedName>
    <alternativeName>
        <fullName evidence="1">Cobalamin-independent methionine synthase</fullName>
    </alternativeName>
    <alternativeName>
        <fullName evidence="1">Methionine synthase, vitamin-B12 independent isozyme</fullName>
    </alternativeName>
</protein>
<comment type="function">
    <text evidence="1">Catalyzes the transfer of a methyl group from 5-methyltetrahydrofolate to homocysteine resulting in methionine formation.</text>
</comment>
<comment type="catalytic activity">
    <reaction evidence="1">
        <text>5-methyltetrahydropteroyltri-L-glutamate + L-homocysteine = tetrahydropteroyltri-L-glutamate + L-methionine</text>
        <dbReference type="Rhea" id="RHEA:21196"/>
        <dbReference type="ChEBI" id="CHEBI:57844"/>
        <dbReference type="ChEBI" id="CHEBI:58140"/>
        <dbReference type="ChEBI" id="CHEBI:58199"/>
        <dbReference type="ChEBI" id="CHEBI:58207"/>
        <dbReference type="EC" id="2.1.1.14"/>
    </reaction>
</comment>
<comment type="cofactor">
    <cofactor evidence="1">
        <name>Zn(2+)</name>
        <dbReference type="ChEBI" id="CHEBI:29105"/>
    </cofactor>
    <text evidence="1">Binds 1 zinc ion per subunit.</text>
</comment>
<comment type="pathway">
    <text evidence="1">Amino-acid biosynthesis; L-methionine biosynthesis via de novo pathway; L-methionine from L-homocysteine (MetE route): step 1/1.</text>
</comment>
<comment type="similarity">
    <text evidence="1">Belongs to the vitamin-B12 independent methionine synthase family.</text>
</comment>
<keyword id="KW-0028">Amino-acid biosynthesis</keyword>
<keyword id="KW-0479">Metal-binding</keyword>
<keyword id="KW-0486">Methionine biosynthesis</keyword>
<keyword id="KW-0489">Methyltransferase</keyword>
<keyword id="KW-1185">Reference proteome</keyword>
<keyword id="KW-0677">Repeat</keyword>
<keyword id="KW-0808">Transferase</keyword>
<keyword id="KW-0862">Zinc</keyword>
<sequence>MSTTIIGFPRLGEFRELKFTTEKYFRHEISAEELLAAAKELRAKHWNIVKEKGISEIPSNDFSHYDNVLDAAFLFNVVPSSVQGLELTDLERYFALARGYQGEKGDVRALPMKKWFNTNYHYIVPKFEKETQVKLAGHKIFDEFAEAKELGLVTRPVVVGPFTLLQVSDFEDGVAPADFVDALVVAYQEVFAKLAELGAERIQLDEPSLVKDLSAEEKALFLDLYKKLLADKKGLEVLVQTYFGDVRDIYADLVQLPVDAIGLDFVEGKKTLELVKGGFPADKTLYAGIVNGKNIWRNNYEKSLAVLEQIPAENIVLTSSCSLLHVPFTTANEEFEPAILNHFAFAVEKLDEIRDLDAIRNGGGAEALAANKELFATERVGENAELRARIAGLTDADYTRLPVFAEREEIQHKTLNLPPLPTTTIGSFPQTKEVRAKRLAFRKGELSQEDYDKFLAEQIDEWIKWQEEVGFDVLVHGEFERNDMVEYFGQNLSGYLFSKNGWVQSYGMRGVKPPIIWGDVTRLNPITVKWSSYAQSRTDKPVKGMLTGPVTILNWSFPREDISIKDSTLQIALAIKDEVLDLEAAGVKIIQIDEAALREKLPLRRSDWYEDYLDWAIPAFRLVHSTVAPDTQIHTHMCYSEFTDIIPAIDNMDADVISFEASRSNLEILDELKAKNFQTEVGPGVYDIHSPRVPNEGEIDHTIEAILAKVPSKKVWINPDCGLKTRGIPETKASLVRLVEAAKAARQHLK</sequence>
<dbReference type="EC" id="2.1.1.14" evidence="1"/>
<dbReference type="EMBL" id="CP000387">
    <property type="protein sequence ID" value="ABN43866.1"/>
    <property type="molecule type" value="Genomic_DNA"/>
</dbReference>
<dbReference type="RefSeq" id="WP_011836499.1">
    <property type="nucleotide sequence ID" value="NC_009009.1"/>
</dbReference>
<dbReference type="RefSeq" id="YP_001034416.1">
    <property type="nucleotide sequence ID" value="NC_009009.1"/>
</dbReference>
<dbReference type="SMR" id="A3CL11"/>
<dbReference type="STRING" id="388919.SSA_0416"/>
<dbReference type="KEGG" id="ssa:SSA_0416"/>
<dbReference type="PATRIC" id="fig|388919.9.peg.402"/>
<dbReference type="eggNOG" id="COG0620">
    <property type="taxonomic scope" value="Bacteria"/>
</dbReference>
<dbReference type="HOGENOM" id="CLU_013175_0_0_9"/>
<dbReference type="OrthoDB" id="244285at2"/>
<dbReference type="UniPathway" id="UPA00051">
    <property type="reaction ID" value="UER00082"/>
</dbReference>
<dbReference type="Proteomes" id="UP000002148">
    <property type="component" value="Chromosome"/>
</dbReference>
<dbReference type="GO" id="GO:0003871">
    <property type="term" value="F:5-methyltetrahydropteroyltriglutamate-homocysteine S-methyltransferase activity"/>
    <property type="evidence" value="ECO:0007669"/>
    <property type="project" value="UniProtKB-UniRule"/>
</dbReference>
<dbReference type="GO" id="GO:0008270">
    <property type="term" value="F:zinc ion binding"/>
    <property type="evidence" value="ECO:0007669"/>
    <property type="project" value="InterPro"/>
</dbReference>
<dbReference type="GO" id="GO:0009086">
    <property type="term" value="P:methionine biosynthetic process"/>
    <property type="evidence" value="ECO:0007669"/>
    <property type="project" value="UniProtKB-UniRule"/>
</dbReference>
<dbReference type="GO" id="GO:0032259">
    <property type="term" value="P:methylation"/>
    <property type="evidence" value="ECO:0007669"/>
    <property type="project" value="UniProtKB-KW"/>
</dbReference>
<dbReference type="CDD" id="cd03311">
    <property type="entry name" value="CIMS_C_terminal_like"/>
    <property type="match status" value="1"/>
</dbReference>
<dbReference type="CDD" id="cd03312">
    <property type="entry name" value="CIMS_N_terminal_like"/>
    <property type="match status" value="1"/>
</dbReference>
<dbReference type="Gene3D" id="3.20.20.210">
    <property type="match status" value="2"/>
</dbReference>
<dbReference type="HAMAP" id="MF_00172">
    <property type="entry name" value="Meth_synth"/>
    <property type="match status" value="1"/>
</dbReference>
<dbReference type="InterPro" id="IPR013215">
    <property type="entry name" value="Cbl-indep_Met_Synth_N"/>
</dbReference>
<dbReference type="InterPro" id="IPR006276">
    <property type="entry name" value="Cobalamin-indep_Met_synthase"/>
</dbReference>
<dbReference type="InterPro" id="IPR002629">
    <property type="entry name" value="Met_Synth_C/arc"/>
</dbReference>
<dbReference type="InterPro" id="IPR038071">
    <property type="entry name" value="UROD/MetE-like_sf"/>
</dbReference>
<dbReference type="NCBIfam" id="TIGR01371">
    <property type="entry name" value="met_syn_B12ind"/>
    <property type="match status" value="1"/>
</dbReference>
<dbReference type="NCBIfam" id="NF003556">
    <property type="entry name" value="PRK05222.1"/>
    <property type="match status" value="1"/>
</dbReference>
<dbReference type="PANTHER" id="PTHR30519">
    <property type="entry name" value="5-METHYLTETRAHYDROPTEROYLTRIGLUTAMATE--HOMOCYSTEINE METHYLTRANSFERASE"/>
    <property type="match status" value="1"/>
</dbReference>
<dbReference type="Pfam" id="PF08267">
    <property type="entry name" value="Meth_synt_1"/>
    <property type="match status" value="1"/>
</dbReference>
<dbReference type="Pfam" id="PF01717">
    <property type="entry name" value="Meth_synt_2"/>
    <property type="match status" value="1"/>
</dbReference>
<dbReference type="PIRSF" id="PIRSF000382">
    <property type="entry name" value="MeTrfase_B12_ind"/>
    <property type="match status" value="1"/>
</dbReference>
<dbReference type="SUPFAM" id="SSF51726">
    <property type="entry name" value="UROD/MetE-like"/>
    <property type="match status" value="2"/>
</dbReference>
<accession>A3CL11</accession>
<feature type="chain" id="PRO_1000017284" description="5-methyltetrahydropteroyltriglutamate--homocysteine methyltransferase">
    <location>
        <begin position="1"/>
        <end position="750"/>
    </location>
</feature>
<feature type="active site" description="Proton donor" evidence="1">
    <location>
        <position position="689"/>
    </location>
</feature>
<feature type="binding site" evidence="1">
    <location>
        <begin position="15"/>
        <end position="18"/>
    </location>
    <ligand>
        <name>5-methyltetrahydropteroyltri-L-glutamate</name>
        <dbReference type="ChEBI" id="CHEBI:58207"/>
    </ligand>
</feature>
<feature type="binding site" evidence="1">
    <location>
        <position position="114"/>
    </location>
    <ligand>
        <name>5-methyltetrahydropteroyltri-L-glutamate</name>
        <dbReference type="ChEBI" id="CHEBI:58207"/>
    </ligand>
</feature>
<feature type="binding site" evidence="1">
    <location>
        <begin position="425"/>
        <end position="427"/>
    </location>
    <ligand>
        <name>L-homocysteine</name>
        <dbReference type="ChEBI" id="CHEBI:58199"/>
    </ligand>
</feature>
<feature type="binding site" evidence="1">
    <location>
        <begin position="425"/>
        <end position="427"/>
    </location>
    <ligand>
        <name>L-methionine</name>
        <dbReference type="ChEBI" id="CHEBI:57844"/>
    </ligand>
</feature>
<feature type="binding site" evidence="1">
    <location>
        <position position="478"/>
    </location>
    <ligand>
        <name>L-homocysteine</name>
        <dbReference type="ChEBI" id="CHEBI:58199"/>
    </ligand>
</feature>
<feature type="binding site" evidence="1">
    <location>
        <position position="478"/>
    </location>
    <ligand>
        <name>L-methionine</name>
        <dbReference type="ChEBI" id="CHEBI:57844"/>
    </ligand>
</feature>
<feature type="binding site" evidence="1">
    <location>
        <position position="555"/>
    </location>
    <ligand>
        <name>5-methyltetrahydropteroyltri-L-glutamate</name>
        <dbReference type="ChEBI" id="CHEBI:58207"/>
    </ligand>
</feature>
<feature type="binding site" evidence="1">
    <location>
        <position position="593"/>
    </location>
    <ligand>
        <name>L-homocysteine</name>
        <dbReference type="ChEBI" id="CHEBI:58199"/>
    </ligand>
</feature>
<feature type="binding site" evidence="1">
    <location>
        <position position="593"/>
    </location>
    <ligand>
        <name>L-methionine</name>
        <dbReference type="ChEBI" id="CHEBI:57844"/>
    </ligand>
</feature>
<feature type="binding site" evidence="1">
    <location>
        <position position="599"/>
    </location>
    <ligand>
        <name>5-methyltetrahydropteroyltri-L-glutamate</name>
        <dbReference type="ChEBI" id="CHEBI:58207"/>
    </ligand>
</feature>
<feature type="binding site" evidence="1">
    <location>
        <position position="636"/>
    </location>
    <ligand>
        <name>Zn(2+)</name>
        <dbReference type="ChEBI" id="CHEBI:29105"/>
        <note>catalytic</note>
    </ligand>
</feature>
<feature type="binding site" evidence="1">
    <location>
        <position position="638"/>
    </location>
    <ligand>
        <name>Zn(2+)</name>
        <dbReference type="ChEBI" id="CHEBI:29105"/>
        <note>catalytic</note>
    </ligand>
</feature>
<feature type="binding site" evidence="1">
    <location>
        <position position="660"/>
    </location>
    <ligand>
        <name>Zn(2+)</name>
        <dbReference type="ChEBI" id="CHEBI:29105"/>
        <note>catalytic</note>
    </ligand>
</feature>
<feature type="binding site" evidence="1">
    <location>
        <position position="721"/>
    </location>
    <ligand>
        <name>Zn(2+)</name>
        <dbReference type="ChEBI" id="CHEBI:29105"/>
        <note>catalytic</note>
    </ligand>
</feature>
<evidence type="ECO:0000255" key="1">
    <source>
        <dbReference type="HAMAP-Rule" id="MF_00172"/>
    </source>
</evidence>